<comment type="function">
    <text evidence="1 4 9">Essential component of both TORC1 and TORC2. TORC1 regulates multiple cellular processes to control cell growth in response to environmental signals. Nutrient limitation and environmental stress signals cause inactivation of TORC1. Active TORC1 positively controls ribosome biogenesis via control of rRNA, ribosomal protein and tRNA gene expression, and rRNA processing. TORC1 positively controls protein biosynthesis by regulation of mRNA stability, translation initiation factor activity, and high-affinity amino acid permeases that serve to provide amino acids for use by the translation machinery. TORC1 also promotes growth by sequestering a number of nutrient and general stress-responsive transcription factors in the cytoplasm. TORC1 negatively controls macroautophagy, a process to recycle surplus cytoplasmic mass under nutrient starvation conditions. LST8 is involved in the negative regulation of transcription factors GLN3 and RTG1-RTG3, limiting the synthesis of alpha-ketoglutarate, glutamate and glutamine. LST8 is required for targeting of amino acid permeases (AAPs) to the plasma membrane. TORC2 regulates cell cycle-dependent polarization of the actin-cytoskeleton, cell wall integrity, and receptor endocytosis. TORC2 controls polarity of the actin cytoskeleton, which is required for orienting the secretory pathway toward discrete growth sites, via the RHO1/PKC1/MAPK cell integrity pathway. LST8 is involved in maintenance of cell wall integrity. LST8 modulates TOR2 kinase activity.</text>
</comment>
<comment type="subunit">
    <text evidence="2 3 4 6 7 8">The target of rapamycin complex 1 (TORC1) is composed of at least KOG1, LST8, TCO89 and either TOR1 (TORC1-A) or TOR2 (TORC1-B) (PubMed:12408816, PubMed:12631735, PubMed:12719473). TORC1 binds to and is inhibited by FKBP-rapamycin (PubMed:12408816). Interacts with PIB2; following activation of PIB2 by glutamine or cysteine and as part of the TORC1 complex (PubMed:29698392). The target of rapamycin complex 2 (TORC2) is composed of at least AVO1, AVO2, BIT61, LST8, TOR2 and TSC11 (PubMed:12408816, PubMed:12631735, PubMed:12719473, PubMed:29170376). TORC2 forms a homodimer (PubMed:16002396, PubMed:29170376). Contrary to TORC1, TORC2 does not bind to and is not sensitive to FKBP-rapamycin (PubMed:12408816). LST8 binds to the C-terminal kinase domain in TOR2 (PubMed:16002396).</text>
</comment>
<comment type="interaction">
    <interactant intactId="EBI-28598">
        <id>P41318</id>
    </interactant>
    <interactant intactId="EBI-29284">
        <id>Q08236</id>
        <label>AVO1</label>
    </interactant>
    <organismsDiffer>false</organismsDiffer>
    <experiments>2</experiments>
</comment>
<comment type="interaction">
    <interactant intactId="EBI-28598">
        <id>P41318</id>
    </interactant>
    <interactant intactId="EBI-28131">
        <id>Q04749</id>
        <label>AVO2</label>
    </interactant>
    <organismsDiffer>false</organismsDiffer>
    <experiments>2</experiments>
</comment>
<comment type="interaction">
    <interactant intactId="EBI-28598">
        <id>P41318</id>
    </interactant>
    <interactant intactId="EBI-24864">
        <id>P38873</id>
        <label>KOG1</label>
    </interactant>
    <organismsDiffer>false</organismsDiffer>
    <experiments>3</experiments>
</comment>
<comment type="interaction">
    <interactant intactId="EBI-28598">
        <id>P41318</id>
    </interactant>
    <interactant intactId="EBI-19374">
        <id>P35169</id>
        <label>TOR1</label>
    </interactant>
    <organismsDiffer>false</organismsDiffer>
    <experiments>5</experiments>
</comment>
<comment type="interaction">
    <interactant intactId="EBI-28598">
        <id>P41318</id>
    </interactant>
    <interactant intactId="EBI-19385">
        <id>P32600</id>
        <label>TOR2</label>
    </interactant>
    <organismsDiffer>false</organismsDiffer>
    <experiments>7</experiments>
</comment>
<comment type="interaction">
    <interactant intactId="EBI-28598">
        <id>P41318</id>
    </interactant>
    <interactant intactId="EBI-22621">
        <id>P40061</id>
        <label>TSC11</label>
    </interactant>
    <organismsDiffer>false</organismsDiffer>
    <experiments>2</experiments>
</comment>
<comment type="subcellular location">
    <subcellularLocation>
        <location>Cell membrane</location>
        <topology>Peripheral membrane protein</topology>
        <orientation>Cytoplasmic side</orientation>
    </subcellularLocation>
    <subcellularLocation>
        <location>Vacuole membrane</location>
        <topology>Peripheral membrane protein</topology>
        <orientation>Cytoplasmic side</orientation>
    </subcellularLocation>
    <text>Also localizes to membranous structures both proximal to, yet distinct from, the plasma membrane as well as within the cell interior, probably endosomal or Golgi membranes.</text>
</comment>
<comment type="miscellaneous">
    <text evidence="5">Present with 589 molecules/cell in log phase SD medium.</text>
</comment>
<comment type="similarity">
    <text evidence="10">Belongs to the WD repeat LST8 family.</text>
</comment>
<gene>
    <name evidence="11" type="primary">LST8</name>
    <name type="ordered locus">YNL006W</name>
    <name type="ORF">N2005</name>
</gene>
<organism>
    <name type="scientific">Saccharomyces cerevisiae (strain ATCC 204508 / S288c)</name>
    <name type="common">Baker's yeast</name>
    <dbReference type="NCBI Taxonomy" id="559292"/>
    <lineage>
        <taxon>Eukaryota</taxon>
        <taxon>Fungi</taxon>
        <taxon>Dikarya</taxon>
        <taxon>Ascomycota</taxon>
        <taxon>Saccharomycotina</taxon>
        <taxon>Saccharomycetes</taxon>
        <taxon>Saccharomycetales</taxon>
        <taxon>Saccharomycetaceae</taxon>
        <taxon>Saccharomyces</taxon>
    </lineage>
</organism>
<evidence type="ECO:0000269" key="1">
    <source>
    </source>
</evidence>
<evidence type="ECO:0000269" key="2">
    <source>
    </source>
</evidence>
<evidence type="ECO:0000269" key="3">
    <source>
    </source>
</evidence>
<evidence type="ECO:0000269" key="4">
    <source>
    </source>
</evidence>
<evidence type="ECO:0000269" key="5">
    <source>
    </source>
</evidence>
<evidence type="ECO:0000269" key="6">
    <source>
    </source>
</evidence>
<evidence type="ECO:0000269" key="7">
    <source>
    </source>
</evidence>
<evidence type="ECO:0000269" key="8">
    <source>
    </source>
</evidence>
<evidence type="ECO:0000269" key="9">
    <source>
    </source>
</evidence>
<evidence type="ECO:0000305" key="10"/>
<evidence type="ECO:0000312" key="11">
    <source>
        <dbReference type="SGD" id="S000004951"/>
    </source>
</evidence>
<evidence type="ECO:0007744" key="12">
    <source>
        <dbReference type="PDB" id="6EMK"/>
    </source>
</evidence>
<protein>
    <recommendedName>
        <fullName>Target of rapamycin complex subunit LST8</fullName>
        <shortName>TORC subunit LST8</shortName>
    </recommendedName>
    <alternativeName>
        <fullName>Lethal with SEC13 protein 8</fullName>
    </alternativeName>
</protein>
<proteinExistence type="evidence at protein level"/>
<keyword id="KW-0002">3D-structure</keyword>
<keyword id="KW-1003">Cell membrane</keyword>
<keyword id="KW-0472">Membrane</keyword>
<keyword id="KW-1185">Reference proteome</keyword>
<keyword id="KW-0677">Repeat</keyword>
<keyword id="KW-0926">Vacuole</keyword>
<keyword id="KW-0853">WD repeat</keyword>
<reference key="1">
    <citation type="journal article" date="1994" name="Yeast">
        <title>Nucleotide sequence analysis of an 8887 bp region of the left arm of yeast chromosome XIV, encompassing the centromere sequence.</title>
        <authorList>
            <person name="Verhasselt P."/>
            <person name="Aert R."/>
            <person name="Voet M."/>
            <person name="Volckaert G."/>
        </authorList>
    </citation>
    <scope>NUCLEOTIDE SEQUENCE [GENOMIC DNA]</scope>
    <source>
        <strain>ATCC 96604 / S288c / FY1679</strain>
    </source>
</reference>
<reference key="2">
    <citation type="journal article" date="1997" name="Nature">
        <title>The nucleotide sequence of Saccharomyces cerevisiae chromosome XIV and its evolutionary implications.</title>
        <authorList>
            <person name="Philippsen P."/>
            <person name="Kleine K."/>
            <person name="Poehlmann R."/>
            <person name="Duesterhoeft A."/>
            <person name="Hamberg K."/>
            <person name="Hegemann J.H."/>
            <person name="Obermaier B."/>
            <person name="Urrestarazu L.A."/>
            <person name="Aert R."/>
            <person name="Albermann K."/>
            <person name="Altmann R."/>
            <person name="Andre B."/>
            <person name="Baladron V."/>
            <person name="Ballesta J.P.G."/>
            <person name="Becam A.-M."/>
            <person name="Beinhauer J.D."/>
            <person name="Boskovic J."/>
            <person name="Buitrago M.J."/>
            <person name="Bussereau F."/>
            <person name="Coster F."/>
            <person name="Crouzet M."/>
            <person name="D'Angelo M."/>
            <person name="Dal Pero F."/>
            <person name="De Antoni A."/>
            <person name="del Rey F."/>
            <person name="Doignon F."/>
            <person name="Domdey H."/>
            <person name="Dubois E."/>
            <person name="Fiedler T.A."/>
            <person name="Fleig U."/>
            <person name="Floeth M."/>
            <person name="Fritz C."/>
            <person name="Gaillardin C."/>
            <person name="Garcia-Cantalejo J.M."/>
            <person name="Glansdorff N."/>
            <person name="Goffeau A."/>
            <person name="Gueldener U."/>
            <person name="Herbert C.J."/>
            <person name="Heumann K."/>
            <person name="Heuss-Neitzel D."/>
            <person name="Hilbert H."/>
            <person name="Hinni K."/>
            <person name="Iraqui Houssaini I."/>
            <person name="Jacquet M."/>
            <person name="Jimenez A."/>
            <person name="Jonniaux J.-L."/>
            <person name="Karpfinger-Hartl L."/>
            <person name="Lanfranchi G."/>
            <person name="Lepingle A."/>
            <person name="Levesque H."/>
            <person name="Lyck R."/>
            <person name="Maftahi M."/>
            <person name="Mallet L."/>
            <person name="Maurer C.T.C."/>
            <person name="Messenguy F."/>
            <person name="Mewes H.-W."/>
            <person name="Moestl D."/>
            <person name="Nasr F."/>
            <person name="Nicaud J.-M."/>
            <person name="Niedenthal R.K."/>
            <person name="Pandolfo D."/>
            <person name="Pierard A."/>
            <person name="Piravandi E."/>
            <person name="Planta R.J."/>
            <person name="Pohl T.M."/>
            <person name="Purnelle B."/>
            <person name="Rebischung C."/>
            <person name="Remacha M.A."/>
            <person name="Revuelta J.L."/>
            <person name="Rinke M."/>
            <person name="Saiz J.E."/>
            <person name="Sartorello F."/>
            <person name="Scherens B."/>
            <person name="Sen-Gupta M."/>
            <person name="Soler-Mira A."/>
            <person name="Urbanus J.H.M."/>
            <person name="Valle G."/>
            <person name="Van Dyck L."/>
            <person name="Verhasselt P."/>
            <person name="Vierendeels F."/>
            <person name="Vissers S."/>
            <person name="Voet M."/>
            <person name="Volckaert G."/>
            <person name="Wach A."/>
            <person name="Wambutt R."/>
            <person name="Wedler H."/>
            <person name="Zollner A."/>
            <person name="Hani J."/>
        </authorList>
    </citation>
    <scope>NUCLEOTIDE SEQUENCE [LARGE SCALE GENOMIC DNA]</scope>
    <source>
        <strain>ATCC 204508 / S288c</strain>
    </source>
</reference>
<reference key="3">
    <citation type="journal article" date="2014" name="G3 (Bethesda)">
        <title>The reference genome sequence of Saccharomyces cerevisiae: Then and now.</title>
        <authorList>
            <person name="Engel S.R."/>
            <person name="Dietrich F.S."/>
            <person name="Fisk D.G."/>
            <person name="Binkley G."/>
            <person name="Balakrishnan R."/>
            <person name="Costanzo M.C."/>
            <person name="Dwight S.S."/>
            <person name="Hitz B.C."/>
            <person name="Karra K."/>
            <person name="Nash R.S."/>
            <person name="Weng S."/>
            <person name="Wong E.D."/>
            <person name="Lloyd P."/>
            <person name="Skrzypek M.S."/>
            <person name="Miyasato S.R."/>
            <person name="Simison M."/>
            <person name="Cherry J.M."/>
        </authorList>
    </citation>
    <scope>GENOME REANNOTATION</scope>
    <source>
        <strain>ATCC 204508 / S288c</strain>
    </source>
</reference>
<reference key="4">
    <citation type="journal article" date="1997" name="Genetics">
        <title>Control of amino acid permease sorting in the late secretory pathway of Saccharomyces cerevisiae by SEC13, LST4, LST7 and LST8.</title>
        <authorList>
            <person name="Roberg K.J."/>
            <person name="Bickel S."/>
            <person name="Rowley N."/>
            <person name="Kaiser C.A."/>
        </authorList>
    </citation>
    <scope>FUNCTION</scope>
    <scope>MUTAGENESIS OF LEU-300</scope>
</reference>
<reference key="5">
    <citation type="journal article" date="2001" name="EMBO J.">
        <title>RTG-dependent mitochondria to nucleus signaling is negatively regulated by the seven WD-repeat protein Lst8p.</title>
        <authorList>
            <person name="Liu Z."/>
            <person name="Sekito T."/>
            <person name="Epstein C.B."/>
            <person name="Butow R.A."/>
        </authorList>
    </citation>
    <scope>FUNCTION</scope>
    <scope>MUTAGENESIS OF GLY-138; GLY-146; GLY-171 AND GLY-181</scope>
</reference>
<reference key="6">
    <citation type="journal article" date="2002" name="Mol. Cell">
        <title>Two TOR complexes, only one of which is rapamycin sensitive, have distinct roles in cell growth control.</title>
        <authorList>
            <person name="Loewith R."/>
            <person name="Jacinto E."/>
            <person name="Wullschleger S."/>
            <person name="Lorberg A."/>
            <person name="Crespo J.L."/>
            <person name="Bonenfant D."/>
            <person name="Oppliger W."/>
            <person name="Jenoe P."/>
            <person name="Hall M.N."/>
        </authorList>
    </citation>
    <scope>IDENTIFICATION IN TORC1 AND TORC2</scope>
    <scope>IDENTIFICATION BY MASS SPECTROMETRY</scope>
</reference>
<reference key="7">
    <citation type="journal article" date="2003" name="J. Cell Biol.">
        <title>LST8 negatively regulates amino acid biosynthesis as a component of the TOR pathway.</title>
        <authorList>
            <person name="Chen E.J."/>
            <person name="Kaiser C.A."/>
        </authorList>
    </citation>
    <scope>FUNCTION</scope>
    <scope>SUBCELLULAR LOCATION</scope>
    <scope>INTERACTION WITH TOR1 AND TOR2</scope>
</reference>
<reference key="8">
    <citation type="journal article" date="2003" name="Mol. Biol. Cell">
        <title>Tor kinases are in distinct membrane-associated protein complexes in Saccharomyces cerevisiae.</title>
        <authorList>
            <person name="Wedaman K.P."/>
            <person name="Reinke A."/>
            <person name="Anderson S."/>
            <person name="Yates J.R. III"/>
            <person name="McCaffery J.M."/>
            <person name="Powers T."/>
        </authorList>
    </citation>
    <scope>SUBCELLULAR LOCATION</scope>
    <scope>IDENTIFICATION IN TORC2</scope>
    <scope>IDENTIFICATION BY MASS SPECTROMETRY</scope>
    <scope>INTERACTION WITH TOR1 AND TOR2</scope>
</reference>
<reference key="9">
    <citation type="journal article" date="2003" name="Nature">
        <title>Global analysis of protein expression in yeast.</title>
        <authorList>
            <person name="Ghaemmaghami S."/>
            <person name="Huh W.-K."/>
            <person name="Bower K."/>
            <person name="Howson R.W."/>
            <person name="Belle A."/>
            <person name="Dephoure N."/>
            <person name="O'Shea E.K."/>
            <person name="Weissman J.S."/>
        </authorList>
    </citation>
    <scope>LEVEL OF PROTEIN EXPRESSION [LARGE SCALE ANALYSIS]</scope>
</reference>
<reference key="10">
    <citation type="journal article" date="2005" name="J. Biol. Chem.">
        <title>Molecular organization of target of rapamycin complex 2.</title>
        <authorList>
            <person name="Wullschleger S."/>
            <person name="Loewith R."/>
            <person name="Oppliger W."/>
            <person name="Hall M.N."/>
        </authorList>
    </citation>
    <scope>SUBUNIT</scope>
    <scope>INTERACTION WITH TOR2</scope>
</reference>
<reference key="11">
    <citation type="journal article" date="2018" name="PLoS Genet.">
        <title>Gtr/Ego-independent TORC1 activation is achieved through a glutamine-sensitive interaction with Pib2 on the vacuolar membrane.</title>
        <authorList>
            <person name="Ukai H."/>
            <person name="Araki Y."/>
            <person name="Kira S."/>
            <person name="Oikawa Y."/>
            <person name="May A.I."/>
            <person name="Noda T."/>
        </authorList>
    </citation>
    <scope>INTERACTION WITH PIB2</scope>
    <scope>IDENTIFICATION BY MASS SPECTROMETRY</scope>
</reference>
<reference evidence="12" key="12">
    <citation type="journal article" date="2017" name="Nat. Commun.">
        <title>Cryo-EM structure of Saccharomyces cerevisiae target of rapamycin complex 2.</title>
        <authorList>
            <person name="Karuppasamy M."/>
            <person name="Kusmider B."/>
            <person name="Oliveira T.M."/>
            <person name="Gaubitz C."/>
            <person name="Prouteau M."/>
            <person name="Loewith R."/>
            <person name="Schaffitzel C."/>
        </authorList>
    </citation>
    <scope>STRUCTURE BY ELECTRON MICROSCOPY (7.90 ANGSTROMS) OF THE TORC2 COMPLEX</scope>
    <scope>IDENTIFICATION IN THE TORC2 COMPLEX</scope>
</reference>
<accession>P41318</accession>
<accession>D6W1H1</accession>
<feature type="chain" id="PRO_0000051483" description="Target of rapamycin complex subunit LST8">
    <location>
        <begin position="1"/>
        <end position="303"/>
    </location>
</feature>
<feature type="repeat" description="WD 1">
    <location>
        <begin position="1"/>
        <end position="27"/>
    </location>
</feature>
<feature type="repeat" description="WD 2">
    <location>
        <begin position="30"/>
        <end position="68"/>
    </location>
</feature>
<feature type="repeat" description="WD 3">
    <location>
        <begin position="73"/>
        <end position="112"/>
    </location>
</feature>
<feature type="repeat" description="WD 4">
    <location>
        <begin position="114"/>
        <end position="153"/>
    </location>
</feature>
<feature type="repeat" description="WD 5">
    <location>
        <begin position="157"/>
        <end position="196"/>
    </location>
</feature>
<feature type="repeat" description="WD 6">
    <location>
        <begin position="205"/>
        <end position="244"/>
    </location>
</feature>
<feature type="repeat" description="WD 7">
    <location>
        <begin position="248"/>
        <end position="287"/>
    </location>
</feature>
<feature type="mutagenesis site" description="In LST8-3; abolishes repression of RTG1-RTG3-dependent gene expression." evidence="1">
    <original>G</original>
    <variation>D</variation>
    <location>
        <position position="138"/>
    </location>
</feature>
<feature type="mutagenesis site" description="In LST8-2; abolishes repression of RTG1-RTG3-dependent gene expression." evidence="1">
    <original>G</original>
    <variation>E</variation>
    <location>
        <position position="146"/>
    </location>
</feature>
<feature type="mutagenesis site" description="In LST8-5; abolishes repression of RTG1-RTG3-dependent gene expression." evidence="1">
    <original>G</original>
    <variation>E</variation>
    <location>
        <position position="171"/>
    </location>
</feature>
<feature type="mutagenesis site" description="In LST8-4; abolishes repression of RTG1-RTG3-dependent gene expression." evidence="1">
    <original>G</original>
    <variation>E</variation>
    <location>
        <position position="181"/>
    </location>
</feature>
<feature type="mutagenesis site" description="In LST8-1; abolishes repression of RTG2- and RTG1-RTG3-dependent gene expression." evidence="9">
    <original>L</original>
    <variation>S</variation>
    <location>
        <position position="300"/>
    </location>
</feature>
<dbReference type="EMBL" id="X77114">
    <property type="protein sequence ID" value="CAA54380.1"/>
    <property type="molecule type" value="Genomic_DNA"/>
</dbReference>
<dbReference type="EMBL" id="Z71282">
    <property type="protein sequence ID" value="CAA95865.1"/>
    <property type="molecule type" value="Genomic_DNA"/>
</dbReference>
<dbReference type="EMBL" id="BK006947">
    <property type="protein sequence ID" value="DAA10537.1"/>
    <property type="molecule type" value="Genomic_DNA"/>
</dbReference>
<dbReference type="PIR" id="S45461">
    <property type="entry name" value="S45461"/>
</dbReference>
<dbReference type="RefSeq" id="NP_014392.3">
    <property type="nucleotide sequence ID" value="NM_001182845.3"/>
</dbReference>
<dbReference type="PDB" id="6EMK">
    <property type="method" value="EM"/>
    <property type="resolution" value="8.00 A"/>
    <property type="chains" value="B/D=1-303"/>
</dbReference>
<dbReference type="PDB" id="7PQH">
    <property type="method" value="EM"/>
    <property type="resolution" value="3.87 A"/>
    <property type="chains" value="C/D/I/L=1-303"/>
</dbReference>
<dbReference type="PDBsum" id="6EMK"/>
<dbReference type="PDBsum" id="7PQH"/>
<dbReference type="EMDB" id="EMD-13594"/>
<dbReference type="EMDB" id="EMD-3896"/>
<dbReference type="SMR" id="P41318"/>
<dbReference type="BioGRID" id="35819">
    <property type="interactions" value="740"/>
</dbReference>
<dbReference type="ComplexPortal" id="CPX-1715">
    <property type="entry name" value="TORC1 serine/threonine-protein kinase complex, TOR1 variant"/>
</dbReference>
<dbReference type="ComplexPortal" id="CPX-1716">
    <property type="entry name" value="TORC1 serine/threonine-protein kinase complex, TOR2 variant"/>
</dbReference>
<dbReference type="ComplexPortal" id="CPX-1717">
    <property type="entry name" value="TORC2 complex"/>
</dbReference>
<dbReference type="DIP" id="DIP-5318N"/>
<dbReference type="FunCoup" id="P41318">
    <property type="interactions" value="756"/>
</dbReference>
<dbReference type="IntAct" id="P41318">
    <property type="interactions" value="41"/>
</dbReference>
<dbReference type="MINT" id="P41318"/>
<dbReference type="STRING" id="4932.YNL006W"/>
<dbReference type="iPTMnet" id="P41318"/>
<dbReference type="PaxDb" id="4932-YNL006W"/>
<dbReference type="PeptideAtlas" id="P41318"/>
<dbReference type="EnsemblFungi" id="YNL006W_mRNA">
    <property type="protein sequence ID" value="YNL006W"/>
    <property type="gene ID" value="YNL006W"/>
</dbReference>
<dbReference type="GeneID" id="855726"/>
<dbReference type="KEGG" id="sce:YNL006W"/>
<dbReference type="AGR" id="SGD:S000004951"/>
<dbReference type="SGD" id="S000004951">
    <property type="gene designation" value="LST8"/>
</dbReference>
<dbReference type="VEuPathDB" id="FungiDB:YNL006W"/>
<dbReference type="eggNOG" id="KOG0315">
    <property type="taxonomic scope" value="Eukaryota"/>
</dbReference>
<dbReference type="GeneTree" id="ENSGT00390000014795"/>
<dbReference type="HOGENOM" id="CLU_000288_57_5_1"/>
<dbReference type="InParanoid" id="P41318"/>
<dbReference type="OMA" id="VQRNYKH"/>
<dbReference type="OrthoDB" id="400at2759"/>
<dbReference type="BioCyc" id="YEAST:G3O-33048-MONOMER"/>
<dbReference type="Reactome" id="R-SCE-1257604">
    <property type="pathway name" value="PIP3 activates AKT signaling"/>
</dbReference>
<dbReference type="Reactome" id="R-SCE-3371571">
    <property type="pathway name" value="HSF1-dependent transactivation"/>
</dbReference>
<dbReference type="Reactome" id="R-SCE-389357">
    <property type="pathway name" value="CD28 dependent PI3K/Akt signaling"/>
</dbReference>
<dbReference type="Reactome" id="R-SCE-5218920">
    <property type="pathway name" value="VEGFR2 mediated vascular permeability"/>
</dbReference>
<dbReference type="Reactome" id="R-SCE-6804757">
    <property type="pathway name" value="Regulation of TP53 Degradation"/>
</dbReference>
<dbReference type="Reactome" id="R-SCE-9639288">
    <property type="pathway name" value="Amino acids regulate mTORC1"/>
</dbReference>
<dbReference type="Reactome" id="R-SCE-9856530">
    <property type="pathway name" value="High laminar flow shear stress activates signaling by PIEZO1 and PECAM1:CDH5:KDR in endothelial cells"/>
</dbReference>
<dbReference type="BioGRID-ORCS" id="855726">
    <property type="hits" value="9 hits in 10 CRISPR screens"/>
</dbReference>
<dbReference type="CD-CODE" id="E03F929F">
    <property type="entry name" value="Stress granule"/>
</dbReference>
<dbReference type="PRO" id="PR:P41318"/>
<dbReference type="Proteomes" id="UP000002311">
    <property type="component" value="Chromosome XIV"/>
</dbReference>
<dbReference type="RNAct" id="P41318">
    <property type="molecule type" value="protein"/>
</dbReference>
<dbReference type="GO" id="GO:0005829">
    <property type="term" value="C:cytosol"/>
    <property type="evidence" value="ECO:0007005"/>
    <property type="project" value="SGD"/>
</dbReference>
<dbReference type="GO" id="GO:0010008">
    <property type="term" value="C:endosome membrane"/>
    <property type="evidence" value="ECO:0000314"/>
    <property type="project" value="SGD"/>
</dbReference>
<dbReference type="GO" id="GO:0000139">
    <property type="term" value="C:Golgi membrane"/>
    <property type="evidence" value="ECO:0000314"/>
    <property type="project" value="SGD"/>
</dbReference>
<dbReference type="GO" id="GO:0034399">
    <property type="term" value="C:nuclear periphery"/>
    <property type="evidence" value="ECO:0000314"/>
    <property type="project" value="SGD"/>
</dbReference>
<dbReference type="GO" id="GO:0005886">
    <property type="term" value="C:plasma membrane"/>
    <property type="evidence" value="ECO:0007669"/>
    <property type="project" value="UniProtKB-SubCell"/>
</dbReference>
<dbReference type="GO" id="GO:0031931">
    <property type="term" value="C:TORC1 complex"/>
    <property type="evidence" value="ECO:0000353"/>
    <property type="project" value="SGD"/>
</dbReference>
<dbReference type="GO" id="GO:0031932">
    <property type="term" value="C:TORC2 complex"/>
    <property type="evidence" value="ECO:0000314"/>
    <property type="project" value="UniProtKB"/>
</dbReference>
<dbReference type="GO" id="GO:0005774">
    <property type="term" value="C:vacuolar membrane"/>
    <property type="evidence" value="ECO:0007669"/>
    <property type="project" value="UniProtKB-SubCell"/>
</dbReference>
<dbReference type="GO" id="GO:0043539">
    <property type="term" value="F:protein serine/threonine kinase activator activity"/>
    <property type="evidence" value="ECO:0000315"/>
    <property type="project" value="SGD"/>
</dbReference>
<dbReference type="GO" id="GO:0030950">
    <property type="term" value="P:establishment or maintenance of actin cytoskeleton polarity"/>
    <property type="evidence" value="ECO:0000315"/>
    <property type="project" value="SGD"/>
</dbReference>
<dbReference type="GO" id="GO:0031505">
    <property type="term" value="P:fungal-type cell wall organization"/>
    <property type="evidence" value="ECO:0000315"/>
    <property type="project" value="SGD"/>
</dbReference>
<dbReference type="GO" id="GO:0031930">
    <property type="term" value="P:mitochondria-nucleus signaling pathway"/>
    <property type="evidence" value="ECO:0000315"/>
    <property type="project" value="SGD"/>
</dbReference>
<dbReference type="GO" id="GO:0032956">
    <property type="term" value="P:regulation of actin cytoskeleton organization"/>
    <property type="evidence" value="ECO:0000318"/>
    <property type="project" value="GO_Central"/>
</dbReference>
<dbReference type="GO" id="GO:0051726">
    <property type="term" value="P:regulation of cell cycle"/>
    <property type="evidence" value="ECO:0000303"/>
    <property type="project" value="ComplexPortal"/>
</dbReference>
<dbReference type="GO" id="GO:0001558">
    <property type="term" value="P:regulation of cell growth"/>
    <property type="evidence" value="ECO:0000353"/>
    <property type="project" value="SGD"/>
</dbReference>
<dbReference type="GO" id="GO:0007584">
    <property type="term" value="P:response to nutrient"/>
    <property type="evidence" value="ECO:0000303"/>
    <property type="project" value="ComplexPortal"/>
</dbReference>
<dbReference type="GO" id="GO:0007165">
    <property type="term" value="P:signal transduction"/>
    <property type="evidence" value="ECO:0000315"/>
    <property type="project" value="SGD"/>
</dbReference>
<dbReference type="GO" id="GO:0031929">
    <property type="term" value="P:TOR signaling"/>
    <property type="evidence" value="ECO:0000315"/>
    <property type="project" value="SGD"/>
</dbReference>
<dbReference type="CDD" id="cd00200">
    <property type="entry name" value="WD40"/>
    <property type="match status" value="1"/>
</dbReference>
<dbReference type="FunFam" id="2.130.10.10:FF:000339">
    <property type="entry name" value="WD-repeat protein pop3"/>
    <property type="match status" value="1"/>
</dbReference>
<dbReference type="Gene3D" id="2.130.10.10">
    <property type="entry name" value="YVTN repeat-like/Quinoprotein amine dehydrogenase"/>
    <property type="match status" value="1"/>
</dbReference>
<dbReference type="InterPro" id="IPR020472">
    <property type="entry name" value="G-protein_beta_WD-40_rep"/>
</dbReference>
<dbReference type="InterPro" id="IPR037588">
    <property type="entry name" value="MLST8"/>
</dbReference>
<dbReference type="InterPro" id="IPR015943">
    <property type="entry name" value="WD40/YVTN_repeat-like_dom_sf"/>
</dbReference>
<dbReference type="InterPro" id="IPR019775">
    <property type="entry name" value="WD40_repeat_CS"/>
</dbReference>
<dbReference type="InterPro" id="IPR036322">
    <property type="entry name" value="WD40_repeat_dom_sf"/>
</dbReference>
<dbReference type="InterPro" id="IPR001680">
    <property type="entry name" value="WD40_rpt"/>
</dbReference>
<dbReference type="PANTHER" id="PTHR19842">
    <property type="entry name" value="G BETA-LIKE PROTEIN GBL"/>
    <property type="match status" value="1"/>
</dbReference>
<dbReference type="PANTHER" id="PTHR19842:SF0">
    <property type="entry name" value="TARGET OF RAPAMYCIN COMPLEX SUBUNIT LST8"/>
    <property type="match status" value="1"/>
</dbReference>
<dbReference type="Pfam" id="PF00400">
    <property type="entry name" value="WD40"/>
    <property type="match status" value="5"/>
</dbReference>
<dbReference type="PRINTS" id="PR00320">
    <property type="entry name" value="GPROTEINBRPT"/>
</dbReference>
<dbReference type="SMART" id="SM00320">
    <property type="entry name" value="WD40"/>
    <property type="match status" value="6"/>
</dbReference>
<dbReference type="SUPFAM" id="SSF50978">
    <property type="entry name" value="WD40 repeat-like"/>
    <property type="match status" value="1"/>
</dbReference>
<dbReference type="PROSITE" id="PS00678">
    <property type="entry name" value="WD_REPEATS_1"/>
    <property type="match status" value="4"/>
</dbReference>
<dbReference type="PROSITE" id="PS50082">
    <property type="entry name" value="WD_REPEATS_2"/>
    <property type="match status" value="5"/>
</dbReference>
<dbReference type="PROSITE" id="PS50294">
    <property type="entry name" value="WD_REPEATS_REGION"/>
    <property type="match status" value="1"/>
</dbReference>
<name>LST8_YEAST</name>
<sequence>MSVILVSAGYDHTIRFWEALTGVCSRTIQHSDSQVNRLEITNDKKLLATAGHQNVRLYDIRTTNPNPVASFEGHRGNVTSVSFQQDNRWMVTSSEDGTIKVWDVRSPSIPRNYKHNAPVNEVVIHPNQGELISCDRDGNIRIWDLGENQCTHQLTPEDDTSLQSLSMASDGSMLAAANTKGNCYVWEMPNHTDASHLKPVTKFRAHSTYITRILLSSDVKHLATCSADHTARVWSIDDDFKLETTLDGHQRWVWDCAFSADSAYLVTASSDHYVRLWDLSTREIVRQYGGHHKGAVCVALNDV</sequence>